<organism>
    <name type="scientific">Mus musculus</name>
    <name type="common">Mouse</name>
    <dbReference type="NCBI Taxonomy" id="10090"/>
    <lineage>
        <taxon>Eukaryota</taxon>
        <taxon>Metazoa</taxon>
        <taxon>Chordata</taxon>
        <taxon>Craniata</taxon>
        <taxon>Vertebrata</taxon>
        <taxon>Euteleostomi</taxon>
        <taxon>Mammalia</taxon>
        <taxon>Eutheria</taxon>
        <taxon>Euarchontoglires</taxon>
        <taxon>Glires</taxon>
        <taxon>Rodentia</taxon>
        <taxon>Myomorpha</taxon>
        <taxon>Muroidea</taxon>
        <taxon>Muridae</taxon>
        <taxon>Murinae</taxon>
        <taxon>Mus</taxon>
        <taxon>Mus</taxon>
    </lineage>
</organism>
<evidence type="ECO:0000255" key="1">
    <source>
        <dbReference type="PROSITE-ProRule" id="PRU00114"/>
    </source>
</evidence>
<evidence type="ECO:0007829" key="2">
    <source>
        <dbReference type="PDB" id="1CFV"/>
    </source>
</evidence>
<feature type="signal peptide">
    <location>
        <begin position="1"/>
        <end position="19"/>
    </location>
</feature>
<feature type="chain" id="PRO_0000015236" description="Ig heavy chain V region RF">
    <location>
        <begin position="20"/>
        <end position="117"/>
    </location>
</feature>
<feature type="region of interest" description="Framework-1">
    <location>
        <begin position="20"/>
        <end position="49"/>
    </location>
</feature>
<feature type="region of interest" description="Complementarity-determining-1">
    <location>
        <begin position="50"/>
        <end position="54"/>
    </location>
</feature>
<feature type="region of interest" description="Framework-2">
    <location>
        <begin position="55"/>
        <end position="68"/>
    </location>
</feature>
<feature type="region of interest" description="Complementarity-determining-2">
    <location>
        <begin position="69"/>
        <end position="85"/>
    </location>
</feature>
<feature type="region of interest" description="Framework-3">
    <location>
        <begin position="86"/>
        <end position="117"/>
    </location>
</feature>
<feature type="disulfide bond" evidence="1">
    <location>
        <begin position="41"/>
        <end position="115"/>
    </location>
</feature>
<feature type="non-terminal residue">
    <location>
        <position position="117"/>
    </location>
</feature>
<feature type="strand" evidence="2">
    <location>
        <begin position="22"/>
        <end position="26"/>
    </location>
</feature>
<feature type="strand" evidence="2">
    <location>
        <begin position="29"/>
        <end position="32"/>
    </location>
</feature>
<feature type="strand" evidence="2">
    <location>
        <begin position="37"/>
        <end position="46"/>
    </location>
</feature>
<feature type="helix" evidence="2">
    <location>
        <begin position="48"/>
        <end position="50"/>
    </location>
</feature>
<feature type="strand" evidence="2">
    <location>
        <begin position="51"/>
        <end position="58"/>
    </location>
</feature>
<feature type="strand" evidence="2">
    <location>
        <begin position="64"/>
        <end position="70"/>
    </location>
</feature>
<feature type="strand" evidence="2">
    <location>
        <begin position="76"/>
        <end position="78"/>
    </location>
</feature>
<feature type="turn" evidence="2">
    <location>
        <begin position="81"/>
        <end position="86"/>
    </location>
</feature>
<feature type="strand" evidence="2">
    <location>
        <begin position="87"/>
        <end position="92"/>
    </location>
</feature>
<feature type="helix" evidence="2">
    <location>
        <begin position="93"/>
        <end position="95"/>
    </location>
</feature>
<feature type="strand" evidence="2">
    <location>
        <begin position="97"/>
        <end position="102"/>
    </location>
</feature>
<feature type="helix" evidence="2">
    <location>
        <begin position="107"/>
        <end position="109"/>
    </location>
</feature>
<feature type="strand" evidence="2">
    <location>
        <begin position="111"/>
        <end position="117"/>
    </location>
</feature>
<reference key="1">
    <citation type="journal article" date="1989" name="J. Exp. Med.">
        <title>Early onset of somatic mutation in immunoglobulin VH genes during the primary immune response.</title>
        <authorList>
            <person name="Levy N.S."/>
            <person name="Malipiero U.V."/>
            <person name="Lebecque S.G."/>
            <person name="Gearhart P.J."/>
        </authorList>
    </citation>
    <scope>NUCLEOTIDE SEQUENCE</scope>
    <source>
        <strain>BALB/cJ</strain>
    </source>
</reference>
<comment type="miscellaneous">
    <text>This sequence belongs to the VH7183 subfamily.</text>
</comment>
<keyword id="KW-0002">3D-structure</keyword>
<keyword id="KW-1064">Adaptive immunity</keyword>
<keyword id="KW-1015">Disulfide bond</keyword>
<keyword id="KW-0374">Hybridoma</keyword>
<keyword id="KW-0391">Immunity</keyword>
<keyword id="KW-1280">Immunoglobulin</keyword>
<keyword id="KW-1185">Reference proteome</keyword>
<keyword id="KW-0732">Signal</keyword>
<proteinExistence type="evidence at protein level"/>
<dbReference type="PIR" id="JT0503">
    <property type="entry name" value="HVMSRF"/>
</dbReference>
<dbReference type="PDB" id="1CFV">
    <property type="method" value="X-ray"/>
    <property type="resolution" value="2.10 A"/>
    <property type="chains" value="H=21-117"/>
</dbReference>
<dbReference type="PDBsum" id="1CFV"/>
<dbReference type="SMR" id="P18524"/>
<dbReference type="FunCoup" id="P18524">
    <property type="interactions" value="644"/>
</dbReference>
<dbReference type="InParanoid" id="P18524"/>
<dbReference type="EvolutionaryTrace" id="P18524"/>
<dbReference type="Proteomes" id="UP000000589">
    <property type="component" value="Unplaced"/>
</dbReference>
<dbReference type="RNAct" id="P18524">
    <property type="molecule type" value="protein"/>
</dbReference>
<dbReference type="GO" id="GO:0005576">
    <property type="term" value="C:extracellular region"/>
    <property type="evidence" value="ECO:0007669"/>
    <property type="project" value="UniProtKB-ARBA"/>
</dbReference>
<dbReference type="GO" id="GO:0019814">
    <property type="term" value="C:immunoglobulin complex"/>
    <property type="evidence" value="ECO:0007669"/>
    <property type="project" value="UniProtKB-KW"/>
</dbReference>
<dbReference type="GO" id="GO:0003823">
    <property type="term" value="F:antigen binding"/>
    <property type="evidence" value="ECO:0000318"/>
    <property type="project" value="GO_Central"/>
</dbReference>
<dbReference type="GO" id="GO:0016064">
    <property type="term" value="P:immunoglobulin mediated immune response"/>
    <property type="evidence" value="ECO:0000318"/>
    <property type="project" value="GO_Central"/>
</dbReference>
<dbReference type="FunFam" id="2.60.40.10:FF:001423">
    <property type="entry name" value="Ig heavy chain V region 5-84"/>
    <property type="match status" value="1"/>
</dbReference>
<dbReference type="Gene3D" id="2.60.40.10">
    <property type="entry name" value="Immunoglobulins"/>
    <property type="match status" value="1"/>
</dbReference>
<dbReference type="InterPro" id="IPR007110">
    <property type="entry name" value="Ig-like_dom"/>
</dbReference>
<dbReference type="InterPro" id="IPR036179">
    <property type="entry name" value="Ig-like_dom_sf"/>
</dbReference>
<dbReference type="InterPro" id="IPR013783">
    <property type="entry name" value="Ig-like_fold"/>
</dbReference>
<dbReference type="InterPro" id="IPR013106">
    <property type="entry name" value="Ig_V-set"/>
</dbReference>
<dbReference type="InterPro" id="IPR050199">
    <property type="entry name" value="IgHV"/>
</dbReference>
<dbReference type="PANTHER" id="PTHR23266">
    <property type="entry name" value="IMMUNOGLOBULIN HEAVY CHAIN"/>
    <property type="match status" value="1"/>
</dbReference>
<dbReference type="Pfam" id="PF07686">
    <property type="entry name" value="V-set"/>
    <property type="match status" value="1"/>
</dbReference>
<dbReference type="SMART" id="SM00406">
    <property type="entry name" value="IGv"/>
    <property type="match status" value="1"/>
</dbReference>
<dbReference type="SUPFAM" id="SSF48726">
    <property type="entry name" value="Immunoglobulin"/>
    <property type="match status" value="1"/>
</dbReference>
<dbReference type="PROSITE" id="PS50835">
    <property type="entry name" value="IG_LIKE"/>
    <property type="match status" value="1"/>
</dbReference>
<protein>
    <recommendedName>
        <fullName>Ig heavy chain V region RF</fullName>
    </recommendedName>
</protein>
<sequence length="117" mass="12866">MNFGLRLIFLVLVLKGVLCDVKLVESGGGLVKLGGSLKLSCAASGFTFSSYYMSWVRQTPEKRLELVAAINSNGGSTYYPDTVKGRFTISRDNAKNTLYLQMSSLKSEDTALYYCAR</sequence>
<name>HVM53_MOUSE</name>
<accession>P18524</accession>